<sequence length="395" mass="42650">MQSMVILGATGSIGASTLSVIASNPETYSVYALVANTNVDKMMALCEQYRPKVAHMVDEQAAKSLQERLSPSLKIEVTTGESQLESIVTSSCVDTVMAAIVGAAGLVPTLAAVKAGKRVLLANKESLVMSGRLFIEEMKKSGAQVLPVDSEHNAIFQALPEPVQQEIGFCDLDEAGISHILLTGSGGPFLTSPLSSLPQMTPAQACKHPNWSMGRKISVDSASMMNKGLEYIEARWLFNASAEQLKVVIHPQSVIHSMVQYRDGSVIAQLGNPDMRTPIAHCMSYPQRINSGVEPLDFFKVGQLSFLEPDFTRFPCLALAIDACNQGQEATTILNAANEISVAAFLDNKIKFTDIAKVNETCLSQVAKQALNSIDDILALDVQTRTYASEWVNKI</sequence>
<organism>
    <name type="scientific">Shewanella woodyi (strain ATCC 51908 / MS32)</name>
    <dbReference type="NCBI Taxonomy" id="392500"/>
    <lineage>
        <taxon>Bacteria</taxon>
        <taxon>Pseudomonadati</taxon>
        <taxon>Pseudomonadota</taxon>
        <taxon>Gammaproteobacteria</taxon>
        <taxon>Alteromonadales</taxon>
        <taxon>Shewanellaceae</taxon>
        <taxon>Shewanella</taxon>
    </lineage>
</organism>
<protein>
    <recommendedName>
        <fullName evidence="1">1-deoxy-D-xylulose 5-phosphate reductoisomerase</fullName>
        <shortName evidence="1">DXP reductoisomerase</shortName>
        <ecNumber evidence="1">1.1.1.267</ecNumber>
    </recommendedName>
    <alternativeName>
        <fullName evidence="1">1-deoxyxylulose-5-phosphate reductoisomerase</fullName>
    </alternativeName>
    <alternativeName>
        <fullName evidence="1">2-C-methyl-D-erythritol 4-phosphate synthase</fullName>
    </alternativeName>
</protein>
<dbReference type="EC" id="1.1.1.267" evidence="1"/>
<dbReference type="EMBL" id="CP000961">
    <property type="protein sequence ID" value="ACA87545.1"/>
    <property type="molecule type" value="Genomic_DNA"/>
</dbReference>
<dbReference type="RefSeq" id="WP_012325881.1">
    <property type="nucleotide sequence ID" value="NC_010506.1"/>
</dbReference>
<dbReference type="SMR" id="B1KNT7"/>
<dbReference type="STRING" id="392500.Swoo_3275"/>
<dbReference type="KEGG" id="swd:Swoo_3275"/>
<dbReference type="eggNOG" id="COG0743">
    <property type="taxonomic scope" value="Bacteria"/>
</dbReference>
<dbReference type="HOGENOM" id="CLU_035714_4_0_6"/>
<dbReference type="UniPathway" id="UPA00056">
    <property type="reaction ID" value="UER00092"/>
</dbReference>
<dbReference type="Proteomes" id="UP000002168">
    <property type="component" value="Chromosome"/>
</dbReference>
<dbReference type="GO" id="GO:0030604">
    <property type="term" value="F:1-deoxy-D-xylulose-5-phosphate reductoisomerase activity"/>
    <property type="evidence" value="ECO:0007669"/>
    <property type="project" value="UniProtKB-UniRule"/>
</dbReference>
<dbReference type="GO" id="GO:0030145">
    <property type="term" value="F:manganese ion binding"/>
    <property type="evidence" value="ECO:0007669"/>
    <property type="project" value="TreeGrafter"/>
</dbReference>
<dbReference type="GO" id="GO:0070402">
    <property type="term" value="F:NADPH binding"/>
    <property type="evidence" value="ECO:0007669"/>
    <property type="project" value="InterPro"/>
</dbReference>
<dbReference type="GO" id="GO:0051484">
    <property type="term" value="P:isopentenyl diphosphate biosynthetic process, methylerythritol 4-phosphate pathway involved in terpenoid biosynthetic process"/>
    <property type="evidence" value="ECO:0007669"/>
    <property type="project" value="TreeGrafter"/>
</dbReference>
<dbReference type="FunFam" id="1.10.1740.10:FF:000004">
    <property type="entry name" value="1-deoxy-D-xylulose 5-phosphate reductoisomerase"/>
    <property type="match status" value="1"/>
</dbReference>
<dbReference type="FunFam" id="3.40.50.720:FF:000045">
    <property type="entry name" value="1-deoxy-D-xylulose 5-phosphate reductoisomerase"/>
    <property type="match status" value="1"/>
</dbReference>
<dbReference type="Gene3D" id="1.10.1740.10">
    <property type="match status" value="1"/>
</dbReference>
<dbReference type="Gene3D" id="3.40.50.720">
    <property type="entry name" value="NAD(P)-binding Rossmann-like Domain"/>
    <property type="match status" value="1"/>
</dbReference>
<dbReference type="HAMAP" id="MF_00183">
    <property type="entry name" value="DXP_reductoisom"/>
    <property type="match status" value="1"/>
</dbReference>
<dbReference type="InterPro" id="IPR003821">
    <property type="entry name" value="DXP_reductoisomerase"/>
</dbReference>
<dbReference type="InterPro" id="IPR013644">
    <property type="entry name" value="DXP_reductoisomerase_C"/>
</dbReference>
<dbReference type="InterPro" id="IPR013512">
    <property type="entry name" value="DXP_reductoisomerase_N"/>
</dbReference>
<dbReference type="InterPro" id="IPR026877">
    <property type="entry name" value="DXPR_C"/>
</dbReference>
<dbReference type="InterPro" id="IPR036169">
    <property type="entry name" value="DXPR_C_sf"/>
</dbReference>
<dbReference type="InterPro" id="IPR036291">
    <property type="entry name" value="NAD(P)-bd_dom_sf"/>
</dbReference>
<dbReference type="NCBIfam" id="TIGR00243">
    <property type="entry name" value="Dxr"/>
    <property type="match status" value="1"/>
</dbReference>
<dbReference type="NCBIfam" id="NF003938">
    <property type="entry name" value="PRK05447.1-1"/>
    <property type="match status" value="1"/>
</dbReference>
<dbReference type="NCBIfam" id="NF009114">
    <property type="entry name" value="PRK12464.1"/>
    <property type="match status" value="1"/>
</dbReference>
<dbReference type="PANTHER" id="PTHR30525">
    <property type="entry name" value="1-DEOXY-D-XYLULOSE 5-PHOSPHATE REDUCTOISOMERASE"/>
    <property type="match status" value="1"/>
</dbReference>
<dbReference type="PANTHER" id="PTHR30525:SF0">
    <property type="entry name" value="1-DEOXY-D-XYLULOSE 5-PHOSPHATE REDUCTOISOMERASE, CHLOROPLASTIC"/>
    <property type="match status" value="1"/>
</dbReference>
<dbReference type="Pfam" id="PF08436">
    <property type="entry name" value="DXP_redisom_C"/>
    <property type="match status" value="1"/>
</dbReference>
<dbReference type="Pfam" id="PF02670">
    <property type="entry name" value="DXP_reductoisom"/>
    <property type="match status" value="1"/>
</dbReference>
<dbReference type="Pfam" id="PF13288">
    <property type="entry name" value="DXPR_C"/>
    <property type="match status" value="1"/>
</dbReference>
<dbReference type="PIRSF" id="PIRSF006205">
    <property type="entry name" value="Dxp_reductismrs"/>
    <property type="match status" value="1"/>
</dbReference>
<dbReference type="SUPFAM" id="SSF69055">
    <property type="entry name" value="1-deoxy-D-xylulose-5-phosphate reductoisomerase, C-terminal domain"/>
    <property type="match status" value="1"/>
</dbReference>
<dbReference type="SUPFAM" id="SSF55347">
    <property type="entry name" value="Glyceraldehyde-3-phosphate dehydrogenase-like, C-terminal domain"/>
    <property type="match status" value="1"/>
</dbReference>
<dbReference type="SUPFAM" id="SSF51735">
    <property type="entry name" value="NAD(P)-binding Rossmann-fold domains"/>
    <property type="match status" value="1"/>
</dbReference>
<evidence type="ECO:0000255" key="1">
    <source>
        <dbReference type="HAMAP-Rule" id="MF_00183"/>
    </source>
</evidence>
<proteinExistence type="inferred from homology"/>
<comment type="function">
    <text evidence="1">Catalyzes the NADPH-dependent rearrangement and reduction of 1-deoxy-D-xylulose-5-phosphate (DXP) to 2-C-methyl-D-erythritol 4-phosphate (MEP).</text>
</comment>
<comment type="catalytic activity">
    <reaction evidence="1">
        <text>2-C-methyl-D-erythritol 4-phosphate + NADP(+) = 1-deoxy-D-xylulose 5-phosphate + NADPH + H(+)</text>
        <dbReference type="Rhea" id="RHEA:13717"/>
        <dbReference type="ChEBI" id="CHEBI:15378"/>
        <dbReference type="ChEBI" id="CHEBI:57783"/>
        <dbReference type="ChEBI" id="CHEBI:57792"/>
        <dbReference type="ChEBI" id="CHEBI:58262"/>
        <dbReference type="ChEBI" id="CHEBI:58349"/>
        <dbReference type="EC" id="1.1.1.267"/>
    </reaction>
    <physiologicalReaction direction="right-to-left" evidence="1">
        <dbReference type="Rhea" id="RHEA:13719"/>
    </physiologicalReaction>
</comment>
<comment type="cofactor">
    <cofactor evidence="1">
        <name>Mg(2+)</name>
        <dbReference type="ChEBI" id="CHEBI:18420"/>
    </cofactor>
    <cofactor evidence="1">
        <name>Mn(2+)</name>
        <dbReference type="ChEBI" id="CHEBI:29035"/>
    </cofactor>
</comment>
<comment type="pathway">
    <text evidence="1">Isoprenoid biosynthesis; isopentenyl diphosphate biosynthesis via DXP pathway; isopentenyl diphosphate from 1-deoxy-D-xylulose 5-phosphate: step 1/6.</text>
</comment>
<comment type="similarity">
    <text evidence="1">Belongs to the DXR family.</text>
</comment>
<name>DXR_SHEWM</name>
<feature type="chain" id="PRO_1000098515" description="1-deoxy-D-xylulose 5-phosphate reductoisomerase">
    <location>
        <begin position="1"/>
        <end position="395"/>
    </location>
</feature>
<feature type="binding site" evidence="1">
    <location>
        <position position="10"/>
    </location>
    <ligand>
        <name>NADPH</name>
        <dbReference type="ChEBI" id="CHEBI:57783"/>
    </ligand>
</feature>
<feature type="binding site" evidence="1">
    <location>
        <position position="11"/>
    </location>
    <ligand>
        <name>NADPH</name>
        <dbReference type="ChEBI" id="CHEBI:57783"/>
    </ligand>
</feature>
<feature type="binding site" evidence="1">
    <location>
        <position position="12"/>
    </location>
    <ligand>
        <name>NADPH</name>
        <dbReference type="ChEBI" id="CHEBI:57783"/>
    </ligand>
</feature>
<feature type="binding site" evidence="1">
    <location>
        <position position="13"/>
    </location>
    <ligand>
        <name>NADPH</name>
        <dbReference type="ChEBI" id="CHEBI:57783"/>
    </ligand>
</feature>
<feature type="binding site" evidence="1">
    <location>
        <position position="38"/>
    </location>
    <ligand>
        <name>NADPH</name>
        <dbReference type="ChEBI" id="CHEBI:57783"/>
    </ligand>
</feature>
<feature type="binding site" evidence="1">
    <location>
        <position position="123"/>
    </location>
    <ligand>
        <name>NADPH</name>
        <dbReference type="ChEBI" id="CHEBI:57783"/>
    </ligand>
</feature>
<feature type="binding site" evidence="1">
    <location>
        <position position="124"/>
    </location>
    <ligand>
        <name>1-deoxy-D-xylulose 5-phosphate</name>
        <dbReference type="ChEBI" id="CHEBI:57792"/>
    </ligand>
</feature>
<feature type="binding site" evidence="1">
    <location>
        <position position="125"/>
    </location>
    <ligand>
        <name>NADPH</name>
        <dbReference type="ChEBI" id="CHEBI:57783"/>
    </ligand>
</feature>
<feature type="binding site" evidence="1">
    <location>
        <position position="149"/>
    </location>
    <ligand>
        <name>Mn(2+)</name>
        <dbReference type="ChEBI" id="CHEBI:29035"/>
    </ligand>
</feature>
<feature type="binding site" evidence="1">
    <location>
        <position position="150"/>
    </location>
    <ligand>
        <name>1-deoxy-D-xylulose 5-phosphate</name>
        <dbReference type="ChEBI" id="CHEBI:57792"/>
    </ligand>
</feature>
<feature type="binding site" evidence="1">
    <location>
        <position position="151"/>
    </location>
    <ligand>
        <name>1-deoxy-D-xylulose 5-phosphate</name>
        <dbReference type="ChEBI" id="CHEBI:57792"/>
    </ligand>
</feature>
<feature type="binding site" evidence="1">
    <location>
        <position position="151"/>
    </location>
    <ligand>
        <name>Mn(2+)</name>
        <dbReference type="ChEBI" id="CHEBI:29035"/>
    </ligand>
</feature>
<feature type="binding site" evidence="1">
    <location>
        <position position="185"/>
    </location>
    <ligand>
        <name>1-deoxy-D-xylulose 5-phosphate</name>
        <dbReference type="ChEBI" id="CHEBI:57792"/>
    </ligand>
</feature>
<feature type="binding site" evidence="1">
    <location>
        <position position="208"/>
    </location>
    <ligand>
        <name>1-deoxy-D-xylulose 5-phosphate</name>
        <dbReference type="ChEBI" id="CHEBI:57792"/>
    </ligand>
</feature>
<feature type="binding site" evidence="1">
    <location>
        <position position="214"/>
    </location>
    <ligand>
        <name>NADPH</name>
        <dbReference type="ChEBI" id="CHEBI:57783"/>
    </ligand>
</feature>
<feature type="binding site" evidence="1">
    <location>
        <position position="221"/>
    </location>
    <ligand>
        <name>1-deoxy-D-xylulose 5-phosphate</name>
        <dbReference type="ChEBI" id="CHEBI:57792"/>
    </ligand>
</feature>
<feature type="binding site" evidence="1">
    <location>
        <position position="226"/>
    </location>
    <ligand>
        <name>1-deoxy-D-xylulose 5-phosphate</name>
        <dbReference type="ChEBI" id="CHEBI:57792"/>
    </ligand>
</feature>
<feature type="binding site" evidence="1">
    <location>
        <position position="227"/>
    </location>
    <ligand>
        <name>1-deoxy-D-xylulose 5-phosphate</name>
        <dbReference type="ChEBI" id="CHEBI:57792"/>
    </ligand>
</feature>
<feature type="binding site" evidence="1">
    <location>
        <position position="230"/>
    </location>
    <ligand>
        <name>1-deoxy-D-xylulose 5-phosphate</name>
        <dbReference type="ChEBI" id="CHEBI:57792"/>
    </ligand>
</feature>
<feature type="binding site" evidence="1">
    <location>
        <position position="230"/>
    </location>
    <ligand>
        <name>Mn(2+)</name>
        <dbReference type="ChEBI" id="CHEBI:29035"/>
    </ligand>
</feature>
<keyword id="KW-0414">Isoprene biosynthesis</keyword>
<keyword id="KW-0464">Manganese</keyword>
<keyword id="KW-0479">Metal-binding</keyword>
<keyword id="KW-0521">NADP</keyword>
<keyword id="KW-0560">Oxidoreductase</keyword>
<keyword id="KW-1185">Reference proteome</keyword>
<gene>
    <name evidence="1" type="primary">dxr</name>
    <name type="ordered locus">Swoo_3275</name>
</gene>
<reference key="1">
    <citation type="submission" date="2008-02" db="EMBL/GenBank/DDBJ databases">
        <title>Complete sequence of Shewanella woodyi ATCC 51908.</title>
        <authorList>
            <consortium name="US DOE Joint Genome Institute"/>
            <person name="Copeland A."/>
            <person name="Lucas S."/>
            <person name="Lapidus A."/>
            <person name="Glavina del Rio T."/>
            <person name="Dalin E."/>
            <person name="Tice H."/>
            <person name="Bruce D."/>
            <person name="Goodwin L."/>
            <person name="Pitluck S."/>
            <person name="Sims D."/>
            <person name="Brettin T."/>
            <person name="Detter J.C."/>
            <person name="Han C."/>
            <person name="Kuske C.R."/>
            <person name="Schmutz J."/>
            <person name="Larimer F."/>
            <person name="Land M."/>
            <person name="Hauser L."/>
            <person name="Kyrpides N."/>
            <person name="Lykidis A."/>
            <person name="Zhao J.-S."/>
            <person name="Richardson P."/>
        </authorList>
    </citation>
    <scope>NUCLEOTIDE SEQUENCE [LARGE SCALE GENOMIC DNA]</scope>
    <source>
        <strain>ATCC 51908 / MS32</strain>
    </source>
</reference>
<accession>B1KNT7</accession>